<proteinExistence type="inferred from homology"/>
<feature type="chain" id="PRO_0000413609" description="Putative ribonuclease VapC34">
    <location>
        <begin position="1"/>
        <end position="82"/>
    </location>
</feature>
<feature type="binding site" evidence="2">
    <location>
        <position position="4"/>
    </location>
    <ligand>
        <name>Mg(2+)</name>
        <dbReference type="ChEBI" id="CHEBI:18420"/>
    </ligand>
</feature>
<protein>
    <recommendedName>
        <fullName>Putative ribonuclease VapC34</fullName>
        <shortName>Putative RNase VapC34</shortName>
        <ecNumber>3.1.-.-</ecNumber>
    </recommendedName>
    <alternativeName>
        <fullName>Toxin VapC34</fullName>
    </alternativeName>
</protein>
<dbReference type="EC" id="3.1.-.-"/>
<dbReference type="EMBL" id="AL123456">
    <property type="protein sequence ID" value="CCP44507.1"/>
    <property type="molecule type" value="Genomic_DNA"/>
</dbReference>
<dbReference type="PIR" id="F70985">
    <property type="entry name" value="F70985"/>
</dbReference>
<dbReference type="RefSeq" id="NP_216257.1">
    <property type="nucleotide sequence ID" value="NC_000962.3"/>
</dbReference>
<dbReference type="RefSeq" id="WP_003898996.1">
    <property type="nucleotide sequence ID" value="NZ_NVQJ01000010.1"/>
</dbReference>
<dbReference type="SMR" id="P9WF71"/>
<dbReference type="STRING" id="83332.Rv1741"/>
<dbReference type="PaxDb" id="83332-Rv1741"/>
<dbReference type="DNASU" id="887165"/>
<dbReference type="GeneID" id="887165"/>
<dbReference type="KEGG" id="mtu:Rv1741"/>
<dbReference type="KEGG" id="mtv:RVBD_1741"/>
<dbReference type="TubercuList" id="Rv1741"/>
<dbReference type="eggNOG" id="COG3742">
    <property type="taxonomic scope" value="Bacteria"/>
</dbReference>
<dbReference type="InParanoid" id="P9WF71"/>
<dbReference type="OrthoDB" id="32625at2"/>
<dbReference type="Proteomes" id="UP000001584">
    <property type="component" value="Chromosome"/>
</dbReference>
<dbReference type="GO" id="GO:0046872">
    <property type="term" value="F:metal ion binding"/>
    <property type="evidence" value="ECO:0007669"/>
    <property type="project" value="UniProtKB-KW"/>
</dbReference>
<dbReference type="GO" id="GO:0004518">
    <property type="term" value="F:nuclease activity"/>
    <property type="evidence" value="ECO:0007669"/>
    <property type="project" value="UniProtKB-KW"/>
</dbReference>
<dbReference type="CDD" id="cd09871">
    <property type="entry name" value="PIN_MtVapC28-VapC30-like"/>
    <property type="match status" value="1"/>
</dbReference>
<dbReference type="Gene3D" id="3.40.50.1010">
    <property type="entry name" value="5'-nuclease"/>
    <property type="match status" value="1"/>
</dbReference>
<dbReference type="InterPro" id="IPR029060">
    <property type="entry name" value="PIN-like_dom_sf"/>
</dbReference>
<dbReference type="InterPro" id="IPR002716">
    <property type="entry name" value="PIN_dom"/>
</dbReference>
<dbReference type="Pfam" id="PF01850">
    <property type="entry name" value="PIN"/>
    <property type="match status" value="1"/>
</dbReference>
<dbReference type="SUPFAM" id="SSF88723">
    <property type="entry name" value="PIN domain-like"/>
    <property type="match status" value="1"/>
</dbReference>
<comment type="function">
    <text evidence="1">Toxic component of a possible type II toxin-antitoxin (TA) system. A putative RNase. Its cognate antitoxin is VapB34 (By similarity).</text>
</comment>
<comment type="cofactor">
    <cofactor evidence="3">
        <name>Mg(2+)</name>
        <dbReference type="ChEBI" id="CHEBI:18420"/>
    </cofactor>
</comment>
<comment type="similarity">
    <text evidence="3">Belongs to the PINc/VapC protein family.</text>
</comment>
<accession>P9WF71</accession>
<accession>L0T7S5</accession>
<accession>O08148</accession>
<accession>P71999</accession>
<accession>Q7D817</accession>
<reference key="1">
    <citation type="journal article" date="1998" name="Nature">
        <title>Deciphering the biology of Mycobacterium tuberculosis from the complete genome sequence.</title>
        <authorList>
            <person name="Cole S.T."/>
            <person name="Brosch R."/>
            <person name="Parkhill J."/>
            <person name="Garnier T."/>
            <person name="Churcher C.M."/>
            <person name="Harris D.E."/>
            <person name="Gordon S.V."/>
            <person name="Eiglmeier K."/>
            <person name="Gas S."/>
            <person name="Barry C.E. III"/>
            <person name="Tekaia F."/>
            <person name="Badcock K."/>
            <person name="Basham D."/>
            <person name="Brown D."/>
            <person name="Chillingworth T."/>
            <person name="Connor R."/>
            <person name="Davies R.M."/>
            <person name="Devlin K."/>
            <person name="Feltwell T."/>
            <person name="Gentles S."/>
            <person name="Hamlin N."/>
            <person name="Holroyd S."/>
            <person name="Hornsby T."/>
            <person name="Jagels K."/>
            <person name="Krogh A."/>
            <person name="McLean J."/>
            <person name="Moule S."/>
            <person name="Murphy L.D."/>
            <person name="Oliver S."/>
            <person name="Osborne J."/>
            <person name="Quail M.A."/>
            <person name="Rajandream M.A."/>
            <person name="Rogers J."/>
            <person name="Rutter S."/>
            <person name="Seeger K."/>
            <person name="Skelton S."/>
            <person name="Squares S."/>
            <person name="Squares R."/>
            <person name="Sulston J.E."/>
            <person name="Taylor K."/>
            <person name="Whitehead S."/>
            <person name="Barrell B.G."/>
        </authorList>
    </citation>
    <scope>NUCLEOTIDE SEQUENCE [LARGE SCALE GENOMIC DNA]</scope>
    <source>
        <strain>ATCC 25618 / H37Rv</strain>
    </source>
</reference>
<reference key="2">
    <citation type="journal article" date="2009" name="PLoS Genet.">
        <title>Comprehensive functional analysis of Mycobacterium tuberculosis toxin-antitoxin systems: implications for pathogenesis, stress responses, and evolution.</title>
        <authorList>
            <person name="Ramage H.R."/>
            <person name="Connolly L.E."/>
            <person name="Cox J.S."/>
        </authorList>
    </citation>
    <scope>POSSIBLE FUNCTION</scope>
    <source>
        <strain>ATCC 35801 / TMC 107 / Erdman</strain>
    </source>
</reference>
<keyword id="KW-0378">Hydrolase</keyword>
<keyword id="KW-0460">Magnesium</keyword>
<keyword id="KW-0479">Metal-binding</keyword>
<keyword id="KW-0540">Nuclease</keyword>
<keyword id="KW-1185">Reference proteome</keyword>
<keyword id="KW-1277">Toxin-antitoxin system</keyword>
<sequence length="82" mass="8884">MVIDTSALVAMLNDEPEAQRFEIAVAADHVWLMSTASYPEMATVIETRFGEPGGREPKVSGQPLLYKGDDFACIDIRAVLAG</sequence>
<gene>
    <name type="primary">vapC34</name>
    <name type="ordered locus">Rv1741</name>
</gene>
<name>VPC34_MYCTU</name>
<evidence type="ECO:0000250" key="1"/>
<evidence type="ECO:0000255" key="2"/>
<evidence type="ECO:0000305" key="3"/>
<organism>
    <name type="scientific">Mycobacterium tuberculosis (strain ATCC 25618 / H37Rv)</name>
    <dbReference type="NCBI Taxonomy" id="83332"/>
    <lineage>
        <taxon>Bacteria</taxon>
        <taxon>Bacillati</taxon>
        <taxon>Actinomycetota</taxon>
        <taxon>Actinomycetes</taxon>
        <taxon>Mycobacteriales</taxon>
        <taxon>Mycobacteriaceae</taxon>
        <taxon>Mycobacterium</taxon>
        <taxon>Mycobacterium tuberculosis complex</taxon>
    </lineage>
</organism>